<dbReference type="EC" id="3.6.-.-" evidence="1"/>
<dbReference type="EMBL" id="AM180252">
    <property type="protein sequence ID" value="CAJ55126.1"/>
    <property type="molecule type" value="Genomic_DNA"/>
</dbReference>
<dbReference type="RefSeq" id="WP_011527155.1">
    <property type="nucleotide sequence ID" value="NC_008011.1"/>
</dbReference>
<dbReference type="SMR" id="Q1MPF1"/>
<dbReference type="STRING" id="363253.LI1072"/>
<dbReference type="KEGG" id="lip:LI1072"/>
<dbReference type="eggNOG" id="COG0486">
    <property type="taxonomic scope" value="Bacteria"/>
</dbReference>
<dbReference type="HOGENOM" id="CLU_019624_4_1_7"/>
<dbReference type="OrthoDB" id="9805918at2"/>
<dbReference type="Proteomes" id="UP000002430">
    <property type="component" value="Chromosome"/>
</dbReference>
<dbReference type="GO" id="GO:0005829">
    <property type="term" value="C:cytosol"/>
    <property type="evidence" value="ECO:0007669"/>
    <property type="project" value="TreeGrafter"/>
</dbReference>
<dbReference type="GO" id="GO:0005525">
    <property type="term" value="F:GTP binding"/>
    <property type="evidence" value="ECO:0007669"/>
    <property type="project" value="UniProtKB-UniRule"/>
</dbReference>
<dbReference type="GO" id="GO:0003924">
    <property type="term" value="F:GTPase activity"/>
    <property type="evidence" value="ECO:0007669"/>
    <property type="project" value="UniProtKB-UniRule"/>
</dbReference>
<dbReference type="GO" id="GO:0046872">
    <property type="term" value="F:metal ion binding"/>
    <property type="evidence" value="ECO:0007669"/>
    <property type="project" value="UniProtKB-KW"/>
</dbReference>
<dbReference type="GO" id="GO:0030488">
    <property type="term" value="P:tRNA methylation"/>
    <property type="evidence" value="ECO:0007669"/>
    <property type="project" value="TreeGrafter"/>
</dbReference>
<dbReference type="GO" id="GO:0002098">
    <property type="term" value="P:tRNA wobble uridine modification"/>
    <property type="evidence" value="ECO:0007669"/>
    <property type="project" value="TreeGrafter"/>
</dbReference>
<dbReference type="CDD" id="cd04164">
    <property type="entry name" value="trmE"/>
    <property type="match status" value="1"/>
</dbReference>
<dbReference type="CDD" id="cd14858">
    <property type="entry name" value="TrmE_N"/>
    <property type="match status" value="1"/>
</dbReference>
<dbReference type="Gene3D" id="3.40.50.300">
    <property type="entry name" value="P-loop containing nucleotide triphosphate hydrolases"/>
    <property type="match status" value="1"/>
</dbReference>
<dbReference type="Gene3D" id="3.30.1360.120">
    <property type="entry name" value="Probable tRNA modification gtpase trme, domain 1"/>
    <property type="match status" value="1"/>
</dbReference>
<dbReference type="Gene3D" id="1.20.120.430">
    <property type="entry name" value="tRNA modification GTPase MnmE domain 2"/>
    <property type="match status" value="1"/>
</dbReference>
<dbReference type="HAMAP" id="MF_00379">
    <property type="entry name" value="GTPase_MnmE"/>
    <property type="match status" value="1"/>
</dbReference>
<dbReference type="InterPro" id="IPR031168">
    <property type="entry name" value="G_TrmE"/>
</dbReference>
<dbReference type="InterPro" id="IPR006073">
    <property type="entry name" value="GTP-bd"/>
</dbReference>
<dbReference type="InterPro" id="IPR018948">
    <property type="entry name" value="GTP-bd_TrmE_N"/>
</dbReference>
<dbReference type="InterPro" id="IPR004520">
    <property type="entry name" value="GTPase_MnmE"/>
</dbReference>
<dbReference type="InterPro" id="IPR027368">
    <property type="entry name" value="MnmE_dom2"/>
</dbReference>
<dbReference type="InterPro" id="IPR025867">
    <property type="entry name" value="MnmE_helical"/>
</dbReference>
<dbReference type="InterPro" id="IPR027417">
    <property type="entry name" value="P-loop_NTPase"/>
</dbReference>
<dbReference type="InterPro" id="IPR005225">
    <property type="entry name" value="Small_GTP-bd"/>
</dbReference>
<dbReference type="InterPro" id="IPR027266">
    <property type="entry name" value="TrmE/GcvT_dom1"/>
</dbReference>
<dbReference type="NCBIfam" id="TIGR00450">
    <property type="entry name" value="mnmE_trmE_thdF"/>
    <property type="match status" value="1"/>
</dbReference>
<dbReference type="NCBIfam" id="TIGR00231">
    <property type="entry name" value="small_GTP"/>
    <property type="match status" value="1"/>
</dbReference>
<dbReference type="PANTHER" id="PTHR42714">
    <property type="entry name" value="TRNA MODIFICATION GTPASE GTPBP3"/>
    <property type="match status" value="1"/>
</dbReference>
<dbReference type="PANTHER" id="PTHR42714:SF2">
    <property type="entry name" value="TRNA MODIFICATION GTPASE GTPBP3, MITOCHONDRIAL"/>
    <property type="match status" value="1"/>
</dbReference>
<dbReference type="Pfam" id="PF01926">
    <property type="entry name" value="MMR_HSR1"/>
    <property type="match status" value="1"/>
</dbReference>
<dbReference type="Pfam" id="PF12631">
    <property type="entry name" value="MnmE_helical"/>
    <property type="match status" value="1"/>
</dbReference>
<dbReference type="Pfam" id="PF10396">
    <property type="entry name" value="TrmE_N"/>
    <property type="match status" value="1"/>
</dbReference>
<dbReference type="SUPFAM" id="SSF52540">
    <property type="entry name" value="P-loop containing nucleoside triphosphate hydrolases"/>
    <property type="match status" value="1"/>
</dbReference>
<dbReference type="PROSITE" id="PS51709">
    <property type="entry name" value="G_TRME"/>
    <property type="match status" value="1"/>
</dbReference>
<feature type="chain" id="PRO_0000345815" description="tRNA modification GTPase MnmE">
    <location>
        <begin position="1"/>
        <end position="459"/>
    </location>
</feature>
<feature type="domain" description="TrmE-type G">
    <location>
        <begin position="219"/>
        <end position="378"/>
    </location>
</feature>
<feature type="binding site" evidence="1">
    <location>
        <position position="21"/>
    </location>
    <ligand>
        <name>(6S)-5-formyl-5,6,7,8-tetrahydrofolate</name>
        <dbReference type="ChEBI" id="CHEBI:57457"/>
    </ligand>
</feature>
<feature type="binding site" evidence="1">
    <location>
        <position position="84"/>
    </location>
    <ligand>
        <name>(6S)-5-formyl-5,6,7,8-tetrahydrofolate</name>
        <dbReference type="ChEBI" id="CHEBI:57457"/>
    </ligand>
</feature>
<feature type="binding site" evidence="1">
    <location>
        <position position="123"/>
    </location>
    <ligand>
        <name>(6S)-5-formyl-5,6,7,8-tetrahydrofolate</name>
        <dbReference type="ChEBI" id="CHEBI:57457"/>
    </ligand>
</feature>
<feature type="binding site" evidence="1">
    <location>
        <begin position="229"/>
        <end position="234"/>
    </location>
    <ligand>
        <name>GTP</name>
        <dbReference type="ChEBI" id="CHEBI:37565"/>
    </ligand>
</feature>
<feature type="binding site" evidence="1">
    <location>
        <position position="233"/>
    </location>
    <ligand>
        <name>Mg(2+)</name>
        <dbReference type="ChEBI" id="CHEBI:18420"/>
    </ligand>
</feature>
<feature type="binding site" evidence="1">
    <location>
        <begin position="248"/>
        <end position="254"/>
    </location>
    <ligand>
        <name>GTP</name>
        <dbReference type="ChEBI" id="CHEBI:37565"/>
    </ligand>
</feature>
<feature type="binding site" evidence="1">
    <location>
        <position position="254"/>
    </location>
    <ligand>
        <name>Mg(2+)</name>
        <dbReference type="ChEBI" id="CHEBI:18420"/>
    </ligand>
</feature>
<feature type="binding site" evidence="1">
    <location>
        <begin position="273"/>
        <end position="276"/>
    </location>
    <ligand>
        <name>GTP</name>
        <dbReference type="ChEBI" id="CHEBI:37565"/>
    </ligand>
</feature>
<feature type="binding site" evidence="1">
    <location>
        <position position="459"/>
    </location>
    <ligand>
        <name>(6S)-5-formyl-5,6,7,8-tetrahydrofolate</name>
        <dbReference type="ChEBI" id="CHEBI:57457"/>
    </ligand>
</feature>
<comment type="function">
    <text evidence="1">Exhibits a very high intrinsic GTPase hydrolysis rate. Involved in the addition of a carboxymethylaminomethyl (cmnm) group at the wobble position (U34) of certain tRNAs, forming tRNA-cmnm(5)s(2)U34.</text>
</comment>
<comment type="cofactor">
    <cofactor evidence="1">
        <name>K(+)</name>
        <dbReference type="ChEBI" id="CHEBI:29103"/>
    </cofactor>
    <text evidence="1">Binds 1 potassium ion per subunit.</text>
</comment>
<comment type="subunit">
    <text evidence="1">Homodimer. Heterotetramer of two MnmE and two MnmG subunits.</text>
</comment>
<comment type="subcellular location">
    <subcellularLocation>
        <location evidence="1">Cytoplasm</location>
    </subcellularLocation>
</comment>
<comment type="similarity">
    <text evidence="1">Belongs to the TRAFAC class TrmE-Era-EngA-EngB-Septin-like GTPase superfamily. TrmE GTPase family.</text>
</comment>
<evidence type="ECO:0000255" key="1">
    <source>
        <dbReference type="HAMAP-Rule" id="MF_00379"/>
    </source>
</evidence>
<protein>
    <recommendedName>
        <fullName evidence="1">tRNA modification GTPase MnmE</fullName>
        <ecNumber evidence="1">3.6.-.-</ecNumber>
    </recommendedName>
</protein>
<proteinExistence type="inferred from homology"/>
<organism>
    <name type="scientific">Lawsonia intracellularis (strain PHE/MN1-00)</name>
    <dbReference type="NCBI Taxonomy" id="363253"/>
    <lineage>
        <taxon>Bacteria</taxon>
        <taxon>Pseudomonadati</taxon>
        <taxon>Thermodesulfobacteriota</taxon>
        <taxon>Desulfovibrionia</taxon>
        <taxon>Desulfovibrionales</taxon>
        <taxon>Desulfovibrionaceae</taxon>
        <taxon>Lawsonia</taxon>
    </lineage>
</organism>
<accession>Q1MPF1</accession>
<keyword id="KW-0963">Cytoplasm</keyword>
<keyword id="KW-0342">GTP-binding</keyword>
<keyword id="KW-0378">Hydrolase</keyword>
<keyword id="KW-0460">Magnesium</keyword>
<keyword id="KW-0479">Metal-binding</keyword>
<keyword id="KW-0547">Nucleotide-binding</keyword>
<keyword id="KW-0630">Potassium</keyword>
<keyword id="KW-1185">Reference proteome</keyword>
<keyword id="KW-0819">tRNA processing</keyword>
<gene>
    <name evidence="1" type="primary">mnmE</name>
    <name evidence="1" type="synonym">trmE</name>
    <name type="ordered locus">LI1072</name>
</gene>
<sequence length="459" mass="50924">MCDTIAAIATPSGTGGIGIIRISGPKSKERLTELFHSVSPKFTDFKPWMLHRGYLVAPTNEFLDDILAVYMPAPYTFTGEDVVELHCHGGHFLLLTILETVLCKNIRLAKPGEFSQRAFLNGRMDLTQAEAVAELIAASSRNEVLLASNRLKGLLGQKIIDIRRRIEELRVWICLAVDFPEEESGIFPLEKFINGLLEIHEIIQKLIHAAERSRCWKEGVTVALAGAVNAGKSSLLNALLGKERAIVTEHPGTTRDFLEECIIVNSLSIRLIDTAGLRVTSDPIEEQGIQKGREKIDEADVILFIIDGTVGVTEESKLLINNFGVERTILVWNKVDLKVPPSNWTELYTSSQVSGICVSAKTGSGIEELLVLLYNFVLSQHNAQEPTFDTIVPNMRQVEVFSLVLEEIRSLYEDIRSGIPYDLCAVMLENISSMLNSIIGFDTPEEVLNRIFASFCIGK</sequence>
<name>MNME_LAWIP</name>
<reference key="1">
    <citation type="submission" date="2005-11" db="EMBL/GenBank/DDBJ databases">
        <title>The complete genome sequence of Lawsonia intracellularis: the causative agent of proliferative enteropathy.</title>
        <authorList>
            <person name="Kaur K."/>
            <person name="Zhang Q."/>
            <person name="Beckler D."/>
            <person name="Munir S."/>
            <person name="Li L."/>
            <person name="Kinsley K."/>
            <person name="Herron L."/>
            <person name="Peterson A."/>
            <person name="May B."/>
            <person name="Singh S."/>
            <person name="Gebhart C."/>
            <person name="Kapur V."/>
        </authorList>
    </citation>
    <scope>NUCLEOTIDE SEQUENCE [LARGE SCALE GENOMIC DNA]</scope>
    <source>
        <strain>PHE/MN1-00</strain>
    </source>
</reference>